<dbReference type="EMBL" id="L77117">
    <property type="protein sequence ID" value="AAB98460.1"/>
    <property type="molecule type" value="Genomic_DNA"/>
</dbReference>
<dbReference type="PIR" id="G64358">
    <property type="entry name" value="G64358"/>
</dbReference>
<dbReference type="RefSeq" id="WP_010869972.1">
    <property type="nucleotide sequence ID" value="NC_000909.1"/>
</dbReference>
<dbReference type="SMR" id="P54042"/>
<dbReference type="FunCoup" id="P54042">
    <property type="interactions" value="149"/>
</dbReference>
<dbReference type="STRING" id="243232.MJ_0471"/>
<dbReference type="PaxDb" id="243232-MJ_0471"/>
<dbReference type="EnsemblBacteria" id="AAB98460">
    <property type="protein sequence ID" value="AAB98460"/>
    <property type="gene ID" value="MJ_0471"/>
</dbReference>
<dbReference type="GeneID" id="1451333"/>
<dbReference type="KEGG" id="mja:MJ_0471"/>
<dbReference type="eggNOG" id="arCOG04090">
    <property type="taxonomic scope" value="Archaea"/>
</dbReference>
<dbReference type="HOGENOM" id="CLU_065464_0_0_2"/>
<dbReference type="InParanoid" id="P54042"/>
<dbReference type="OrthoDB" id="7144at2157"/>
<dbReference type="PhylomeDB" id="P54042"/>
<dbReference type="Proteomes" id="UP000000805">
    <property type="component" value="Chromosome"/>
</dbReference>
<dbReference type="GO" id="GO:0022625">
    <property type="term" value="C:cytosolic large ribosomal subunit"/>
    <property type="evidence" value="ECO:0000318"/>
    <property type="project" value="GO_Central"/>
</dbReference>
<dbReference type="GO" id="GO:0019843">
    <property type="term" value="F:rRNA binding"/>
    <property type="evidence" value="ECO:0007669"/>
    <property type="project" value="UniProtKB-UniRule"/>
</dbReference>
<dbReference type="GO" id="GO:0003735">
    <property type="term" value="F:structural constituent of ribosome"/>
    <property type="evidence" value="ECO:0000318"/>
    <property type="project" value="GO_Central"/>
</dbReference>
<dbReference type="GO" id="GO:0002181">
    <property type="term" value="P:cytoplasmic translation"/>
    <property type="evidence" value="ECO:0000318"/>
    <property type="project" value="GO_Central"/>
</dbReference>
<dbReference type="FunFam" id="3.90.930.12:FF:000008">
    <property type="entry name" value="50S ribosomal protein L6"/>
    <property type="match status" value="1"/>
</dbReference>
<dbReference type="FunFam" id="3.90.930.12:FF:000004">
    <property type="entry name" value="60S ribosomal protein L9"/>
    <property type="match status" value="1"/>
</dbReference>
<dbReference type="Gene3D" id="3.90.930.12">
    <property type="entry name" value="Ribosomal protein L6, alpha-beta domain"/>
    <property type="match status" value="2"/>
</dbReference>
<dbReference type="HAMAP" id="MF_01365_A">
    <property type="entry name" value="Ribosomal_uL6_A"/>
    <property type="match status" value="1"/>
</dbReference>
<dbReference type="InterPro" id="IPR000702">
    <property type="entry name" value="Ribosomal_uL6-like"/>
</dbReference>
<dbReference type="InterPro" id="IPR036789">
    <property type="entry name" value="Ribosomal_uL6-like_a/b-dom_sf"/>
</dbReference>
<dbReference type="InterPro" id="IPR020040">
    <property type="entry name" value="Ribosomal_uL6_a/b-dom"/>
</dbReference>
<dbReference type="InterPro" id="IPR019907">
    <property type="entry name" value="Ribosomal_uL6_arc"/>
</dbReference>
<dbReference type="InterPro" id="IPR002359">
    <property type="entry name" value="Ribosomal_uL6_CS2"/>
</dbReference>
<dbReference type="NCBIfam" id="NF004037">
    <property type="entry name" value="PRK05518.1"/>
    <property type="match status" value="1"/>
</dbReference>
<dbReference type="NCBIfam" id="TIGR03653">
    <property type="entry name" value="uL6_arch"/>
    <property type="match status" value="1"/>
</dbReference>
<dbReference type="PANTHER" id="PTHR11655:SF16">
    <property type="entry name" value="60S RIBOSOMAL PROTEIN L9"/>
    <property type="match status" value="1"/>
</dbReference>
<dbReference type="PANTHER" id="PTHR11655">
    <property type="entry name" value="60S/50S RIBOSOMAL PROTEIN L6/L9"/>
    <property type="match status" value="1"/>
</dbReference>
<dbReference type="Pfam" id="PF00347">
    <property type="entry name" value="Ribosomal_L6"/>
    <property type="match status" value="2"/>
</dbReference>
<dbReference type="PIRSF" id="PIRSF002162">
    <property type="entry name" value="Ribosomal_L6"/>
    <property type="match status" value="1"/>
</dbReference>
<dbReference type="SUPFAM" id="SSF56053">
    <property type="entry name" value="Ribosomal protein L6"/>
    <property type="match status" value="2"/>
</dbReference>
<dbReference type="PROSITE" id="PS00700">
    <property type="entry name" value="RIBOSOMAL_L6_2"/>
    <property type="match status" value="1"/>
</dbReference>
<gene>
    <name evidence="1" type="primary">rpl6</name>
    <name type="ordered locus">MJ0471</name>
</gene>
<comment type="function">
    <text evidence="1">This protein binds to the 23S rRNA, and is important in its secondary structure. It is located near the subunit interface in the base of the L7/L12 stalk, and near the tRNA binding site of the peptidyltransferase center.</text>
</comment>
<comment type="subunit">
    <text evidence="1">Part of the 50S ribosomal subunit.</text>
</comment>
<comment type="similarity">
    <text evidence="1">Belongs to the universal ribosomal protein uL6 family.</text>
</comment>
<reference key="1">
    <citation type="journal article" date="1996" name="Science">
        <title>Complete genome sequence of the methanogenic archaeon, Methanococcus jannaschii.</title>
        <authorList>
            <person name="Bult C.J."/>
            <person name="White O."/>
            <person name="Olsen G.J."/>
            <person name="Zhou L."/>
            <person name="Fleischmann R.D."/>
            <person name="Sutton G.G."/>
            <person name="Blake J.A."/>
            <person name="FitzGerald L.M."/>
            <person name="Clayton R.A."/>
            <person name="Gocayne J.D."/>
            <person name="Kerlavage A.R."/>
            <person name="Dougherty B.A."/>
            <person name="Tomb J.-F."/>
            <person name="Adams M.D."/>
            <person name="Reich C.I."/>
            <person name="Overbeek R."/>
            <person name="Kirkness E.F."/>
            <person name="Weinstock K.G."/>
            <person name="Merrick J.M."/>
            <person name="Glodek A."/>
            <person name="Scott J.L."/>
            <person name="Geoghagen N.S.M."/>
            <person name="Weidman J.F."/>
            <person name="Fuhrmann J.L."/>
            <person name="Nguyen D."/>
            <person name="Utterback T.R."/>
            <person name="Kelley J.M."/>
            <person name="Peterson J.D."/>
            <person name="Sadow P.W."/>
            <person name="Hanna M.C."/>
            <person name="Cotton M.D."/>
            <person name="Roberts K.M."/>
            <person name="Hurst M.A."/>
            <person name="Kaine B.P."/>
            <person name="Borodovsky M."/>
            <person name="Klenk H.-P."/>
            <person name="Fraser C.M."/>
            <person name="Smith H.O."/>
            <person name="Woese C.R."/>
            <person name="Venter J.C."/>
        </authorList>
    </citation>
    <scope>NUCLEOTIDE SEQUENCE [LARGE SCALE GENOMIC DNA]</scope>
    <source>
        <strain>ATCC 43067 / DSM 2661 / JAL-1 / JCM 10045 / NBRC 100440</strain>
    </source>
</reference>
<feature type="chain" id="PRO_0000131085" description="Large ribosomal subunit protein uL6">
    <location>
        <begin position="1"/>
        <end position="182"/>
    </location>
</feature>
<proteinExistence type="inferred from homology"/>
<name>RL6_METJA</name>
<protein>
    <recommendedName>
        <fullName evidence="1">Large ribosomal subunit protein uL6</fullName>
    </recommendedName>
    <alternativeName>
        <fullName evidence="2">50S ribosomal protein L6</fullName>
    </alternativeName>
</protein>
<accession>P54042</accession>
<organism>
    <name type="scientific">Methanocaldococcus jannaschii (strain ATCC 43067 / DSM 2661 / JAL-1 / JCM 10045 / NBRC 100440)</name>
    <name type="common">Methanococcus jannaschii</name>
    <dbReference type="NCBI Taxonomy" id="243232"/>
    <lineage>
        <taxon>Archaea</taxon>
        <taxon>Methanobacteriati</taxon>
        <taxon>Methanobacteriota</taxon>
        <taxon>Methanomada group</taxon>
        <taxon>Methanococci</taxon>
        <taxon>Methanococcales</taxon>
        <taxon>Methanocaldococcaceae</taxon>
        <taxon>Methanocaldococcus</taxon>
    </lineage>
</organism>
<keyword id="KW-1185">Reference proteome</keyword>
<keyword id="KW-0687">Ribonucleoprotein</keyword>
<keyword id="KW-0689">Ribosomal protein</keyword>
<keyword id="KW-0694">RNA-binding</keyword>
<keyword id="KW-0699">rRNA-binding</keyword>
<sequence length="182" mass="20655">MPVAAYIEERVKIPENVQVEINNNEVVVKSGGKELRRRFEHPKIVIKKEGDEIVIFCEYPRRKDKAMVGTIRAHINNMIKGVTEGFTYKLKIRYAHFPMKVSVKGNEVIIENFLGEKHPRRARIMEGVTVKISGEDVIVTGIDKEKVGQTAANIEQATRIKGRDPRVFQDGIYIVEKAGKAI</sequence>
<evidence type="ECO:0000255" key="1">
    <source>
        <dbReference type="HAMAP-Rule" id="MF_01365"/>
    </source>
</evidence>
<evidence type="ECO:0000305" key="2"/>